<protein>
    <recommendedName>
        <fullName evidence="1">Diphthine synthase</fullName>
        <ecNumber evidence="1">2.1.1.98</ecNumber>
    </recommendedName>
    <alternativeName>
        <fullName evidence="1">Diphthamide biosynthesis methyltransferase</fullName>
    </alternativeName>
</protein>
<keyword id="KW-0489">Methyltransferase</keyword>
<keyword id="KW-0949">S-adenosyl-L-methionine</keyword>
<keyword id="KW-0808">Transferase</keyword>
<comment type="function">
    <text evidence="1">S-adenosyl-L-methionine-dependent methyltransferase that catalyzes the trimethylation of the amino group of the modified target histidine residue in translation elongation factor 2 (EF-2), to form an intermediate called diphthine. The three successive methylation reactions represent the second step of diphthamide biosynthesis.</text>
</comment>
<comment type="catalytic activity">
    <reaction evidence="1">
        <text>2-[(3S)-amino-3-carboxypropyl]-L-histidyl-[translation elongation factor 2] + 3 S-adenosyl-L-methionine = diphthine-[translation elongation factor 2] + 3 S-adenosyl-L-homocysteine + 3 H(+)</text>
        <dbReference type="Rhea" id="RHEA:36415"/>
        <dbReference type="Rhea" id="RHEA-COMP:9749"/>
        <dbReference type="Rhea" id="RHEA-COMP:10172"/>
        <dbReference type="ChEBI" id="CHEBI:15378"/>
        <dbReference type="ChEBI" id="CHEBI:57856"/>
        <dbReference type="ChEBI" id="CHEBI:59789"/>
        <dbReference type="ChEBI" id="CHEBI:73995"/>
        <dbReference type="ChEBI" id="CHEBI:82696"/>
        <dbReference type="EC" id="2.1.1.98"/>
    </reaction>
</comment>
<comment type="pathway">
    <text evidence="1">Protein modification; peptidyl-diphthamide biosynthesis.</text>
</comment>
<comment type="subunit">
    <text evidence="1">Homodimer.</text>
</comment>
<comment type="similarity">
    <text evidence="1">Belongs to the diphthine synthase family.</text>
</comment>
<dbReference type="EC" id="2.1.1.98" evidence="1"/>
<dbReference type="EMBL" id="CP000561">
    <property type="protein sequence ID" value="ABO08131.1"/>
    <property type="molecule type" value="Genomic_DNA"/>
</dbReference>
<dbReference type="RefSeq" id="WP_011849389.1">
    <property type="nucleotide sequence ID" value="NC_009073.1"/>
</dbReference>
<dbReference type="SMR" id="A3MU14"/>
<dbReference type="STRING" id="410359.Pcal_0705"/>
<dbReference type="GeneID" id="4908149"/>
<dbReference type="KEGG" id="pcl:Pcal_0705"/>
<dbReference type="eggNOG" id="arCOG04161">
    <property type="taxonomic scope" value="Archaea"/>
</dbReference>
<dbReference type="HOGENOM" id="CLU_066040_0_0_2"/>
<dbReference type="OrthoDB" id="39139at2157"/>
<dbReference type="UniPathway" id="UPA00559"/>
<dbReference type="Proteomes" id="UP000001431">
    <property type="component" value="Chromosome"/>
</dbReference>
<dbReference type="GO" id="GO:0004164">
    <property type="term" value="F:diphthine synthase activity"/>
    <property type="evidence" value="ECO:0007669"/>
    <property type="project" value="UniProtKB-UniRule"/>
</dbReference>
<dbReference type="GO" id="GO:0032259">
    <property type="term" value="P:methylation"/>
    <property type="evidence" value="ECO:0007669"/>
    <property type="project" value="UniProtKB-KW"/>
</dbReference>
<dbReference type="GO" id="GO:0017183">
    <property type="term" value="P:protein histidyl modification to diphthamide"/>
    <property type="evidence" value="ECO:0007669"/>
    <property type="project" value="UniProtKB-UniRule"/>
</dbReference>
<dbReference type="CDD" id="cd11647">
    <property type="entry name" value="DHP5_DphB"/>
    <property type="match status" value="1"/>
</dbReference>
<dbReference type="Gene3D" id="3.40.1010.10">
    <property type="entry name" value="Cobalt-precorrin-4 Transmethylase, Domain 1"/>
    <property type="match status" value="1"/>
</dbReference>
<dbReference type="Gene3D" id="3.30.950.10">
    <property type="entry name" value="Methyltransferase, Cobalt-precorrin-4 Transmethylase, Domain 2"/>
    <property type="match status" value="1"/>
</dbReference>
<dbReference type="HAMAP" id="MF_01084">
    <property type="entry name" value="Diphthine_synth"/>
    <property type="match status" value="1"/>
</dbReference>
<dbReference type="InterPro" id="IPR000878">
    <property type="entry name" value="4pyrrol_Mease"/>
</dbReference>
<dbReference type="InterPro" id="IPR035996">
    <property type="entry name" value="4pyrrol_Methylase_sf"/>
</dbReference>
<dbReference type="InterPro" id="IPR014777">
    <property type="entry name" value="4pyrrole_Mease_sub1"/>
</dbReference>
<dbReference type="InterPro" id="IPR014776">
    <property type="entry name" value="4pyrrole_Mease_sub2"/>
</dbReference>
<dbReference type="InterPro" id="IPR004551">
    <property type="entry name" value="Dphthn_synthase"/>
</dbReference>
<dbReference type="NCBIfam" id="TIGR00522">
    <property type="entry name" value="dph5"/>
    <property type="match status" value="1"/>
</dbReference>
<dbReference type="PANTHER" id="PTHR10882:SF0">
    <property type="entry name" value="DIPHTHINE METHYL ESTER SYNTHASE"/>
    <property type="match status" value="1"/>
</dbReference>
<dbReference type="PANTHER" id="PTHR10882">
    <property type="entry name" value="DIPHTHINE SYNTHASE"/>
    <property type="match status" value="1"/>
</dbReference>
<dbReference type="Pfam" id="PF00590">
    <property type="entry name" value="TP_methylase"/>
    <property type="match status" value="1"/>
</dbReference>
<dbReference type="PIRSF" id="PIRSF036432">
    <property type="entry name" value="Diphthine_synth"/>
    <property type="match status" value="1"/>
</dbReference>
<dbReference type="SUPFAM" id="SSF53790">
    <property type="entry name" value="Tetrapyrrole methylase"/>
    <property type="match status" value="1"/>
</dbReference>
<sequence>MLYIVGIGPGPGYATERAIRAIEEADCVFYEDYTGPIDVETLRRAAKTPPIRLTRRDLEDESGRKVLECLREGKRAVLATAGDPMLATAHAALIAAARARGHPVEVVPGVSIICAAFSAACLSIYKLGGVATVTYPRGGVYSTRPYELAEANLARGLHTLLLLDVREDGSFMPPRDAAEVLMALEERERRGVFTPQRPAVVVHRLGWGGGVVVGPLGAVAKWDGEGPAVLIIPAQLGPVEKECLEAVAQRI</sequence>
<proteinExistence type="inferred from homology"/>
<organism>
    <name type="scientific">Pyrobaculum calidifontis (strain DSM 21063 / JCM 11548 / VA1)</name>
    <dbReference type="NCBI Taxonomy" id="410359"/>
    <lineage>
        <taxon>Archaea</taxon>
        <taxon>Thermoproteota</taxon>
        <taxon>Thermoprotei</taxon>
        <taxon>Thermoproteales</taxon>
        <taxon>Thermoproteaceae</taxon>
        <taxon>Pyrobaculum</taxon>
    </lineage>
</organism>
<accession>A3MU14</accession>
<gene>
    <name evidence="1" type="primary">dphB</name>
    <name type="ordered locus">Pcal_0705</name>
</gene>
<name>DPHB_PYRCJ</name>
<reference key="1">
    <citation type="submission" date="2007-02" db="EMBL/GenBank/DDBJ databases">
        <title>Complete sequence of Pyrobaculum calidifontis JCM 11548.</title>
        <authorList>
            <consortium name="US DOE Joint Genome Institute"/>
            <person name="Copeland A."/>
            <person name="Lucas S."/>
            <person name="Lapidus A."/>
            <person name="Barry K."/>
            <person name="Glavina del Rio T."/>
            <person name="Dalin E."/>
            <person name="Tice H."/>
            <person name="Pitluck S."/>
            <person name="Chain P."/>
            <person name="Malfatti S."/>
            <person name="Shin M."/>
            <person name="Vergez L."/>
            <person name="Schmutz J."/>
            <person name="Larimer F."/>
            <person name="Land M."/>
            <person name="Hauser L."/>
            <person name="Kyrpides N."/>
            <person name="Mikhailova N."/>
            <person name="Cozen A.E."/>
            <person name="Fitz-Gibbon S.T."/>
            <person name="House C.H."/>
            <person name="Saltikov C."/>
            <person name="Lowe T.M."/>
            <person name="Richardson P."/>
        </authorList>
    </citation>
    <scope>NUCLEOTIDE SEQUENCE [LARGE SCALE GENOMIC DNA]</scope>
    <source>
        <strain>DSM 21063 / JCM 11548 / VA1</strain>
    </source>
</reference>
<feature type="chain" id="PRO_1000064828" description="Diphthine synthase">
    <location>
        <begin position="1"/>
        <end position="251"/>
    </location>
</feature>
<feature type="binding site" evidence="1">
    <location>
        <position position="83"/>
    </location>
    <ligand>
        <name>S-adenosyl-L-methionine</name>
        <dbReference type="ChEBI" id="CHEBI:59789"/>
    </ligand>
</feature>
<feature type="binding site" evidence="1">
    <location>
        <position position="86"/>
    </location>
    <ligand>
        <name>S-adenosyl-L-methionine</name>
        <dbReference type="ChEBI" id="CHEBI:59789"/>
    </ligand>
</feature>
<feature type="binding site" evidence="1">
    <location>
        <begin position="111"/>
        <end position="112"/>
    </location>
    <ligand>
        <name>S-adenosyl-L-methionine</name>
        <dbReference type="ChEBI" id="CHEBI:59789"/>
    </ligand>
</feature>
<feature type="binding site" evidence="1">
    <location>
        <position position="163"/>
    </location>
    <ligand>
        <name>S-adenosyl-L-methionine</name>
        <dbReference type="ChEBI" id="CHEBI:59789"/>
    </ligand>
</feature>
<feature type="binding site" evidence="1">
    <location>
        <position position="205"/>
    </location>
    <ligand>
        <name>S-adenosyl-L-methionine</name>
        <dbReference type="ChEBI" id="CHEBI:59789"/>
    </ligand>
</feature>
<evidence type="ECO:0000255" key="1">
    <source>
        <dbReference type="HAMAP-Rule" id="MF_01084"/>
    </source>
</evidence>